<accession>Q8EH93</accession>
<gene>
    <name evidence="1" type="primary">nhaA</name>
    <name type="ordered locus">SO_1336</name>
</gene>
<proteinExistence type="inferred from homology"/>
<evidence type="ECO:0000255" key="1">
    <source>
        <dbReference type="HAMAP-Rule" id="MF_01844"/>
    </source>
</evidence>
<dbReference type="EMBL" id="AE014299">
    <property type="protein sequence ID" value="AAN54401.1"/>
    <property type="molecule type" value="Genomic_DNA"/>
</dbReference>
<dbReference type="RefSeq" id="NP_716956.1">
    <property type="nucleotide sequence ID" value="NC_004347.2"/>
</dbReference>
<dbReference type="RefSeq" id="WP_011071545.1">
    <property type="nucleotide sequence ID" value="NC_004347.2"/>
</dbReference>
<dbReference type="SMR" id="Q8EH93"/>
<dbReference type="STRING" id="211586.SO_1336"/>
<dbReference type="PaxDb" id="211586-SO_1336"/>
<dbReference type="KEGG" id="son:SO_1336"/>
<dbReference type="PATRIC" id="fig|211586.12.peg.1286"/>
<dbReference type="eggNOG" id="COG3004">
    <property type="taxonomic scope" value="Bacteria"/>
</dbReference>
<dbReference type="HOGENOM" id="CLU_015803_1_0_6"/>
<dbReference type="OrthoDB" id="9808135at2"/>
<dbReference type="PhylomeDB" id="Q8EH93"/>
<dbReference type="BioCyc" id="SONE211586:G1GMP-1234-MONOMER"/>
<dbReference type="Proteomes" id="UP000008186">
    <property type="component" value="Chromosome"/>
</dbReference>
<dbReference type="GO" id="GO:0005886">
    <property type="term" value="C:plasma membrane"/>
    <property type="evidence" value="ECO:0000318"/>
    <property type="project" value="GO_Central"/>
</dbReference>
<dbReference type="GO" id="GO:0015385">
    <property type="term" value="F:sodium:proton antiporter activity"/>
    <property type="evidence" value="ECO:0000318"/>
    <property type="project" value="GO_Central"/>
</dbReference>
<dbReference type="GO" id="GO:0006885">
    <property type="term" value="P:regulation of pH"/>
    <property type="evidence" value="ECO:0007669"/>
    <property type="project" value="InterPro"/>
</dbReference>
<dbReference type="Gene3D" id="1.20.1530.10">
    <property type="entry name" value="Na+/H+ antiporter like domain"/>
    <property type="match status" value="1"/>
</dbReference>
<dbReference type="HAMAP" id="MF_01844">
    <property type="entry name" value="NhaA"/>
    <property type="match status" value="1"/>
</dbReference>
<dbReference type="InterPro" id="IPR023171">
    <property type="entry name" value="Na/H_antiporter_dom_sf"/>
</dbReference>
<dbReference type="InterPro" id="IPR004670">
    <property type="entry name" value="NhaA"/>
</dbReference>
<dbReference type="NCBIfam" id="TIGR00773">
    <property type="entry name" value="NhaA"/>
    <property type="match status" value="1"/>
</dbReference>
<dbReference type="NCBIfam" id="NF007111">
    <property type="entry name" value="PRK09560.1"/>
    <property type="match status" value="1"/>
</dbReference>
<dbReference type="NCBIfam" id="NF007112">
    <property type="entry name" value="PRK09561.1"/>
    <property type="match status" value="1"/>
</dbReference>
<dbReference type="PANTHER" id="PTHR30341:SF0">
    <property type="entry name" value="NA(+)_H(+) ANTIPORTER NHAA"/>
    <property type="match status" value="1"/>
</dbReference>
<dbReference type="PANTHER" id="PTHR30341">
    <property type="entry name" value="SODIUM ION/PROTON ANTIPORTER NHAA-RELATED"/>
    <property type="match status" value="1"/>
</dbReference>
<dbReference type="Pfam" id="PF06965">
    <property type="entry name" value="Na_H_antiport_1"/>
    <property type="match status" value="1"/>
</dbReference>
<feature type="chain" id="PRO_0000334427" description="Na(+)/H(+) antiporter NhaA">
    <location>
        <begin position="1"/>
        <end position="389"/>
    </location>
</feature>
<feature type="transmembrane region" description="Helical" evidence="1">
    <location>
        <begin position="17"/>
        <end position="37"/>
    </location>
</feature>
<feature type="transmembrane region" description="Helical" evidence="1">
    <location>
        <begin position="59"/>
        <end position="79"/>
    </location>
</feature>
<feature type="transmembrane region" description="Helical" evidence="1">
    <location>
        <begin position="95"/>
        <end position="115"/>
    </location>
</feature>
<feature type="transmembrane region" description="Helical" evidence="1">
    <location>
        <begin position="124"/>
        <end position="144"/>
    </location>
</feature>
<feature type="transmembrane region" description="Helical" evidence="1">
    <location>
        <begin position="154"/>
        <end position="174"/>
    </location>
</feature>
<feature type="transmembrane region" description="Helical" evidence="1">
    <location>
        <begin position="177"/>
        <end position="197"/>
    </location>
</feature>
<feature type="transmembrane region" description="Helical" evidence="1">
    <location>
        <begin position="213"/>
        <end position="233"/>
    </location>
</feature>
<feature type="transmembrane region" description="Helical" evidence="1">
    <location>
        <begin position="261"/>
        <end position="281"/>
    </location>
</feature>
<feature type="transmembrane region" description="Helical" evidence="1">
    <location>
        <begin position="292"/>
        <end position="312"/>
    </location>
</feature>
<feature type="transmembrane region" description="Helical" evidence="1">
    <location>
        <begin position="328"/>
        <end position="348"/>
    </location>
</feature>
<feature type="transmembrane region" description="Helical" evidence="1">
    <location>
        <begin position="363"/>
        <end position="383"/>
    </location>
</feature>
<sequence length="389" mass="40848">MEKAIRNFLSQESAGGILLLIAVAFAMLMANSPLAGFYQGFLGTEVQVRVGALDLHKPLLLWINDGLMALFFLLIGLEVKRELLEGALSSVAQASLPTFAAIGGMLVPAGIYLLFNYGDPITQAGWAIPAATDIAFALGIMALLGSRVPVALKVFLLALAIIDDLGVIVIIALFYSSDLSTVSLIIASIAIVGLVALNRKGVTSLAPYGVLGLILWVAVLKSGVHATLAGVIIAFCIPLRAKDGSSPSEHLEHSLHPWSTFLILPVFAFANAGVALGNMSLDTLMSPVPVGIALGLMLGKPIGVMLFSFVAVKLKLAQLPDGIGWKQIAPVAAMCGIGFTMSMFIASLAFEQADPMFGDLARLGTLMGSIFAALIGYFWLSKVLPKKGV</sequence>
<organism>
    <name type="scientific">Shewanella oneidensis (strain ATCC 700550 / JCM 31522 / CIP 106686 / LMG 19005 / NCIMB 14063 / MR-1)</name>
    <dbReference type="NCBI Taxonomy" id="211586"/>
    <lineage>
        <taxon>Bacteria</taxon>
        <taxon>Pseudomonadati</taxon>
        <taxon>Pseudomonadota</taxon>
        <taxon>Gammaproteobacteria</taxon>
        <taxon>Alteromonadales</taxon>
        <taxon>Shewanellaceae</taxon>
        <taxon>Shewanella</taxon>
    </lineage>
</organism>
<name>NHAA_SHEON</name>
<keyword id="KW-0050">Antiport</keyword>
<keyword id="KW-0997">Cell inner membrane</keyword>
<keyword id="KW-1003">Cell membrane</keyword>
<keyword id="KW-0406">Ion transport</keyword>
<keyword id="KW-0472">Membrane</keyword>
<keyword id="KW-1185">Reference proteome</keyword>
<keyword id="KW-0915">Sodium</keyword>
<keyword id="KW-0739">Sodium transport</keyword>
<keyword id="KW-0812">Transmembrane</keyword>
<keyword id="KW-1133">Transmembrane helix</keyword>
<keyword id="KW-0813">Transport</keyword>
<comment type="function">
    <text evidence="1">Na(+)/H(+) antiporter that extrudes sodium in exchange for external protons.</text>
</comment>
<comment type="catalytic activity">
    <reaction evidence="1">
        <text>Na(+)(in) + 2 H(+)(out) = Na(+)(out) + 2 H(+)(in)</text>
        <dbReference type="Rhea" id="RHEA:29251"/>
        <dbReference type="ChEBI" id="CHEBI:15378"/>
        <dbReference type="ChEBI" id="CHEBI:29101"/>
    </reaction>
    <physiologicalReaction direction="left-to-right" evidence="1">
        <dbReference type="Rhea" id="RHEA:29252"/>
    </physiologicalReaction>
</comment>
<comment type="subcellular location">
    <subcellularLocation>
        <location evidence="1">Cell inner membrane</location>
        <topology evidence="1">Multi-pass membrane protein</topology>
    </subcellularLocation>
</comment>
<comment type="similarity">
    <text evidence="1">Belongs to the NhaA Na(+)/H(+) (TC 2.A.33) antiporter family.</text>
</comment>
<protein>
    <recommendedName>
        <fullName evidence="1">Na(+)/H(+) antiporter NhaA</fullName>
    </recommendedName>
    <alternativeName>
        <fullName evidence="1">Sodium/proton antiporter NhaA</fullName>
    </alternativeName>
</protein>
<reference key="1">
    <citation type="journal article" date="2002" name="Nat. Biotechnol.">
        <title>Genome sequence of the dissimilatory metal ion-reducing bacterium Shewanella oneidensis.</title>
        <authorList>
            <person name="Heidelberg J.F."/>
            <person name="Paulsen I.T."/>
            <person name="Nelson K.E."/>
            <person name="Gaidos E.J."/>
            <person name="Nelson W.C."/>
            <person name="Read T.D."/>
            <person name="Eisen J.A."/>
            <person name="Seshadri R."/>
            <person name="Ward N.L."/>
            <person name="Methe B.A."/>
            <person name="Clayton R.A."/>
            <person name="Meyer T."/>
            <person name="Tsapin A."/>
            <person name="Scott J."/>
            <person name="Beanan M.J."/>
            <person name="Brinkac L.M."/>
            <person name="Daugherty S.C."/>
            <person name="DeBoy R.T."/>
            <person name="Dodson R.J."/>
            <person name="Durkin A.S."/>
            <person name="Haft D.H."/>
            <person name="Kolonay J.F."/>
            <person name="Madupu R."/>
            <person name="Peterson J.D."/>
            <person name="Umayam L.A."/>
            <person name="White O."/>
            <person name="Wolf A.M."/>
            <person name="Vamathevan J.J."/>
            <person name="Weidman J.F."/>
            <person name="Impraim M."/>
            <person name="Lee K."/>
            <person name="Berry K.J."/>
            <person name="Lee C."/>
            <person name="Mueller J."/>
            <person name="Khouri H.M."/>
            <person name="Gill J."/>
            <person name="Utterback T.R."/>
            <person name="McDonald L.A."/>
            <person name="Feldblyum T.V."/>
            <person name="Smith H.O."/>
            <person name="Venter J.C."/>
            <person name="Nealson K.H."/>
            <person name="Fraser C.M."/>
        </authorList>
    </citation>
    <scope>NUCLEOTIDE SEQUENCE [LARGE SCALE GENOMIC DNA]</scope>
    <source>
        <strain>ATCC 700550 / JCM 31522 / CIP 106686 / LMG 19005 / NCIMB 14063 / MR-1</strain>
    </source>
</reference>